<feature type="chain" id="PRO_1000193868" description="Large ribosomal subunit protein bL19">
    <location>
        <begin position="1"/>
        <end position="118"/>
    </location>
</feature>
<dbReference type="EMBL" id="CP001279">
    <property type="protein sequence ID" value="ACM92089.1"/>
    <property type="molecule type" value="Genomic_DNA"/>
</dbReference>
<dbReference type="RefSeq" id="WP_012663461.1">
    <property type="nucleotide sequence ID" value="NC_012115.1"/>
</dbReference>
<dbReference type="SMR" id="B9L6B0"/>
<dbReference type="STRING" id="598659.NAMH_1508"/>
<dbReference type="KEGG" id="nam:NAMH_1508"/>
<dbReference type="eggNOG" id="COG0335">
    <property type="taxonomic scope" value="Bacteria"/>
</dbReference>
<dbReference type="HOGENOM" id="CLU_103507_2_2_7"/>
<dbReference type="OrthoDB" id="9803541at2"/>
<dbReference type="Proteomes" id="UP000000448">
    <property type="component" value="Chromosome"/>
</dbReference>
<dbReference type="GO" id="GO:0022625">
    <property type="term" value="C:cytosolic large ribosomal subunit"/>
    <property type="evidence" value="ECO:0007669"/>
    <property type="project" value="TreeGrafter"/>
</dbReference>
<dbReference type="GO" id="GO:0003735">
    <property type="term" value="F:structural constituent of ribosome"/>
    <property type="evidence" value="ECO:0007669"/>
    <property type="project" value="InterPro"/>
</dbReference>
<dbReference type="GO" id="GO:0006412">
    <property type="term" value="P:translation"/>
    <property type="evidence" value="ECO:0007669"/>
    <property type="project" value="UniProtKB-UniRule"/>
</dbReference>
<dbReference type="FunFam" id="2.30.30.790:FF:000001">
    <property type="entry name" value="50S ribosomal protein L19"/>
    <property type="match status" value="1"/>
</dbReference>
<dbReference type="Gene3D" id="2.30.30.790">
    <property type="match status" value="1"/>
</dbReference>
<dbReference type="HAMAP" id="MF_00402">
    <property type="entry name" value="Ribosomal_bL19"/>
    <property type="match status" value="1"/>
</dbReference>
<dbReference type="InterPro" id="IPR001857">
    <property type="entry name" value="Ribosomal_bL19"/>
</dbReference>
<dbReference type="InterPro" id="IPR018257">
    <property type="entry name" value="Ribosomal_bL19_CS"/>
</dbReference>
<dbReference type="InterPro" id="IPR038657">
    <property type="entry name" value="Ribosomal_bL19_sf"/>
</dbReference>
<dbReference type="InterPro" id="IPR008991">
    <property type="entry name" value="Translation_prot_SH3-like_sf"/>
</dbReference>
<dbReference type="NCBIfam" id="TIGR01024">
    <property type="entry name" value="rplS_bact"/>
    <property type="match status" value="1"/>
</dbReference>
<dbReference type="PANTHER" id="PTHR15680:SF9">
    <property type="entry name" value="LARGE RIBOSOMAL SUBUNIT PROTEIN BL19M"/>
    <property type="match status" value="1"/>
</dbReference>
<dbReference type="PANTHER" id="PTHR15680">
    <property type="entry name" value="RIBOSOMAL PROTEIN L19"/>
    <property type="match status" value="1"/>
</dbReference>
<dbReference type="Pfam" id="PF01245">
    <property type="entry name" value="Ribosomal_L19"/>
    <property type="match status" value="1"/>
</dbReference>
<dbReference type="PIRSF" id="PIRSF002191">
    <property type="entry name" value="Ribosomal_L19"/>
    <property type="match status" value="1"/>
</dbReference>
<dbReference type="PRINTS" id="PR00061">
    <property type="entry name" value="RIBOSOMALL19"/>
</dbReference>
<dbReference type="SUPFAM" id="SSF50104">
    <property type="entry name" value="Translation proteins SH3-like domain"/>
    <property type="match status" value="1"/>
</dbReference>
<dbReference type="PROSITE" id="PS01015">
    <property type="entry name" value="RIBOSOMAL_L19"/>
    <property type="match status" value="1"/>
</dbReference>
<gene>
    <name evidence="1" type="primary">rplS</name>
    <name type="ordered locus">NAMH_1508</name>
</gene>
<sequence>MRNKFIEAFEAKQIEGKKIPEFRPGDTVRVAVEIKEGDKKRIQNFEGVVIAIKGQGAGKTFTVRKIGANNIGIERIFPLYSESIAGIEVVRKGKVRRAKLYYLRGKTGKKARIKERRD</sequence>
<comment type="function">
    <text evidence="1">This protein is located at the 30S-50S ribosomal subunit interface and may play a role in the structure and function of the aminoacyl-tRNA binding site.</text>
</comment>
<comment type="similarity">
    <text evidence="1">Belongs to the bacterial ribosomal protein bL19 family.</text>
</comment>
<evidence type="ECO:0000255" key="1">
    <source>
        <dbReference type="HAMAP-Rule" id="MF_00402"/>
    </source>
</evidence>
<evidence type="ECO:0000305" key="2"/>
<accession>B9L6B0</accession>
<proteinExistence type="inferred from homology"/>
<organism>
    <name type="scientific">Nautilia profundicola (strain ATCC BAA-1463 / DSM 18972 / AmH)</name>
    <dbReference type="NCBI Taxonomy" id="598659"/>
    <lineage>
        <taxon>Bacteria</taxon>
        <taxon>Pseudomonadati</taxon>
        <taxon>Campylobacterota</taxon>
        <taxon>Epsilonproteobacteria</taxon>
        <taxon>Nautiliales</taxon>
        <taxon>Nautiliaceae</taxon>
        <taxon>Nautilia</taxon>
    </lineage>
</organism>
<name>RL19_NAUPA</name>
<reference key="1">
    <citation type="journal article" date="2009" name="PLoS Genet.">
        <title>Adaptations to submarine hydrothermal environments exemplified by the genome of Nautilia profundicola.</title>
        <authorList>
            <person name="Campbell B.J."/>
            <person name="Smith J.L."/>
            <person name="Hanson T.E."/>
            <person name="Klotz M.G."/>
            <person name="Stein L.Y."/>
            <person name="Lee C.K."/>
            <person name="Wu D."/>
            <person name="Robinson J.M."/>
            <person name="Khouri H.M."/>
            <person name="Eisen J.A."/>
            <person name="Cary S.C."/>
        </authorList>
    </citation>
    <scope>NUCLEOTIDE SEQUENCE [LARGE SCALE GENOMIC DNA]</scope>
    <source>
        <strain>ATCC BAA-1463 / DSM 18972 / AmH</strain>
    </source>
</reference>
<protein>
    <recommendedName>
        <fullName evidence="1">Large ribosomal subunit protein bL19</fullName>
    </recommendedName>
    <alternativeName>
        <fullName evidence="2">50S ribosomal protein L19</fullName>
    </alternativeName>
</protein>
<keyword id="KW-0687">Ribonucleoprotein</keyword>
<keyword id="KW-0689">Ribosomal protein</keyword>